<comment type="function">
    <text>May be signaling molecules that resemble neuropeptides. Ligand for alpha-neurexins.</text>
</comment>
<comment type="subcellular location">
    <subcellularLocation>
        <location evidence="5">Secreted</location>
    </subcellularLocation>
</comment>
<comment type="tissue specificity">
    <text evidence="4">Highest level in brain, present also in lung, kidney and testis.</text>
</comment>
<comment type="PTM">
    <text evidence="1">May be proteolytically processed at the boundary between the N-terminal non-conserved and the central conserved domain in neuron-like cells.</text>
</comment>
<comment type="similarity">
    <text evidence="5">Belongs to the neurexophilin family.</text>
</comment>
<accession>Q91VX5</accession>
<sequence>MQLTRCCFVFLVQGSLYLVICGQDDGPPGSEDPEHDDHEGQPRPRVPRKRGHISPKSRPLANSTLLGLLAPPGEVWGVLGQPPNRPKQSPLPSTKVKKIFGWGDFYSNIKTVALNLLVTGKIVDHGNGTFSVHFRHNATGQGNISISLVPPSKAVEFHQEQQIFIEAKASKIFNCRMEWEKVERGRRTSLCTHDPAKICSRDHAQSSATWSCSQPFKVVCVYIAFYSTDYRLVQKVCPDYNYHSDTPYYPSG</sequence>
<name>NXPH3_MOUSE</name>
<evidence type="ECO:0000250" key="1"/>
<evidence type="ECO:0000255" key="2"/>
<evidence type="ECO:0000256" key="3">
    <source>
        <dbReference type="SAM" id="MobiDB-lite"/>
    </source>
</evidence>
<evidence type="ECO:0000269" key="4">
    <source>
    </source>
</evidence>
<evidence type="ECO:0000305" key="5"/>
<protein>
    <recommendedName>
        <fullName>Neurexophilin-3</fullName>
    </recommendedName>
</protein>
<reference key="1">
    <citation type="journal article" date="2004" name="Genome Res.">
        <title>The status, quality, and expansion of the NIH full-length cDNA project: the Mammalian Gene Collection (MGC).</title>
        <authorList>
            <consortium name="The MGC Project Team"/>
        </authorList>
    </citation>
    <scope>NUCLEOTIDE SEQUENCE [LARGE SCALE MRNA]</scope>
    <source>
        <tissue>Mammary gland</tissue>
    </source>
</reference>
<reference key="2">
    <citation type="journal article" date="1998" name="J. Neurosci.">
        <title>Neurexophilins form a conserved family of neuropeptide-like glycoproteins.</title>
        <authorList>
            <person name="Missler M."/>
            <person name="Suedhof T.C."/>
        </authorList>
    </citation>
    <scope>TISSUE SPECIFICITY</scope>
</reference>
<keyword id="KW-0325">Glycoprotein</keyword>
<keyword id="KW-1185">Reference proteome</keyword>
<keyword id="KW-0964">Secreted</keyword>
<keyword id="KW-0732">Signal</keyword>
<dbReference type="EMBL" id="BC007167">
    <property type="protein sequence ID" value="AAH07167.1"/>
    <property type="molecule type" value="mRNA"/>
</dbReference>
<dbReference type="CCDS" id="CCDS25278.1"/>
<dbReference type="RefSeq" id="NP_570928.1">
    <property type="nucleotide sequence ID" value="NM_130858.4"/>
</dbReference>
<dbReference type="SMR" id="Q91VX5"/>
<dbReference type="FunCoup" id="Q91VX5">
    <property type="interactions" value="266"/>
</dbReference>
<dbReference type="IntAct" id="Q91VX5">
    <property type="interactions" value="2"/>
</dbReference>
<dbReference type="STRING" id="10090.ENSMUSP00000058254"/>
<dbReference type="GlyConnect" id="2543">
    <property type="glycosylation" value="5 N-Linked glycans (1 site)"/>
</dbReference>
<dbReference type="GlyCosmos" id="Q91VX5">
    <property type="glycosylation" value="4 sites, 5 glycans"/>
</dbReference>
<dbReference type="GlyGen" id="Q91VX5">
    <property type="glycosylation" value="4 sites, 9 N-linked glycans (4 sites)"/>
</dbReference>
<dbReference type="iPTMnet" id="Q91VX5"/>
<dbReference type="PhosphoSitePlus" id="Q91VX5"/>
<dbReference type="PaxDb" id="10090-ENSMUSP00000058254"/>
<dbReference type="ProteomicsDB" id="293817"/>
<dbReference type="Antibodypedia" id="30401">
    <property type="antibodies" value="172 antibodies from 26 providers"/>
</dbReference>
<dbReference type="DNASU" id="104079"/>
<dbReference type="Ensembl" id="ENSMUST00000058866.8">
    <property type="protein sequence ID" value="ENSMUSP00000058254.8"/>
    <property type="gene ID" value="ENSMUSG00000046719.8"/>
</dbReference>
<dbReference type="GeneID" id="104079"/>
<dbReference type="KEGG" id="mmu:104079"/>
<dbReference type="UCSC" id="uc007lal.1">
    <property type="organism name" value="mouse"/>
</dbReference>
<dbReference type="AGR" id="MGI:1336188"/>
<dbReference type="CTD" id="11248"/>
<dbReference type="MGI" id="MGI:1336188">
    <property type="gene designation" value="Nxph3"/>
</dbReference>
<dbReference type="VEuPathDB" id="HostDB:ENSMUSG00000046719"/>
<dbReference type="eggNOG" id="ENOG502QSZ5">
    <property type="taxonomic scope" value="Eukaryota"/>
</dbReference>
<dbReference type="GeneTree" id="ENSGT00950000182883"/>
<dbReference type="HOGENOM" id="CLU_067114_2_0_1"/>
<dbReference type="InParanoid" id="Q91VX5"/>
<dbReference type="OMA" id="PSKTCYH"/>
<dbReference type="OrthoDB" id="9887748at2759"/>
<dbReference type="PhylomeDB" id="Q91VX5"/>
<dbReference type="TreeFam" id="TF333047"/>
<dbReference type="BioGRID-ORCS" id="104079">
    <property type="hits" value="1 hit in 76 CRISPR screens"/>
</dbReference>
<dbReference type="PRO" id="PR:Q91VX5"/>
<dbReference type="Proteomes" id="UP000000589">
    <property type="component" value="Chromosome 11"/>
</dbReference>
<dbReference type="RNAct" id="Q91VX5">
    <property type="molecule type" value="protein"/>
</dbReference>
<dbReference type="Bgee" id="ENSMUSG00000046719">
    <property type="expression patterns" value="Expressed in cortical plate and 122 other cell types or tissues"/>
</dbReference>
<dbReference type="ExpressionAtlas" id="Q91VX5">
    <property type="expression patterns" value="baseline and differential"/>
</dbReference>
<dbReference type="GO" id="GO:0005576">
    <property type="term" value="C:extracellular region"/>
    <property type="evidence" value="ECO:0007669"/>
    <property type="project" value="UniProtKB-SubCell"/>
</dbReference>
<dbReference type="GO" id="GO:0005102">
    <property type="term" value="F:signaling receptor binding"/>
    <property type="evidence" value="ECO:0000314"/>
    <property type="project" value="MGI"/>
</dbReference>
<dbReference type="InterPro" id="IPR010450">
    <property type="entry name" value="Nxph"/>
</dbReference>
<dbReference type="InterPro" id="IPR026845">
    <property type="entry name" value="NXPH/NXPE"/>
</dbReference>
<dbReference type="PANTHER" id="PTHR17103">
    <property type="entry name" value="NEUREXOPHILIN"/>
    <property type="match status" value="1"/>
</dbReference>
<dbReference type="PANTHER" id="PTHR17103:SF14">
    <property type="entry name" value="NEUREXOPHILIN-3"/>
    <property type="match status" value="1"/>
</dbReference>
<dbReference type="Pfam" id="PF06312">
    <property type="entry name" value="Neurexophilin"/>
    <property type="match status" value="1"/>
</dbReference>
<dbReference type="PIRSF" id="PIRSF038019">
    <property type="entry name" value="Neurexophilin"/>
    <property type="match status" value="1"/>
</dbReference>
<organism>
    <name type="scientific">Mus musculus</name>
    <name type="common">Mouse</name>
    <dbReference type="NCBI Taxonomy" id="10090"/>
    <lineage>
        <taxon>Eukaryota</taxon>
        <taxon>Metazoa</taxon>
        <taxon>Chordata</taxon>
        <taxon>Craniata</taxon>
        <taxon>Vertebrata</taxon>
        <taxon>Euteleostomi</taxon>
        <taxon>Mammalia</taxon>
        <taxon>Eutheria</taxon>
        <taxon>Euarchontoglires</taxon>
        <taxon>Glires</taxon>
        <taxon>Rodentia</taxon>
        <taxon>Myomorpha</taxon>
        <taxon>Muroidea</taxon>
        <taxon>Muridae</taxon>
        <taxon>Murinae</taxon>
        <taxon>Mus</taxon>
        <taxon>Mus</taxon>
    </lineage>
</organism>
<feature type="signal peptide" evidence="2">
    <location>
        <begin position="1"/>
        <end position="22"/>
    </location>
</feature>
<feature type="chain" id="PRO_0000020066" description="Neurexophilin-3">
    <location>
        <begin position="23"/>
        <end position="252"/>
    </location>
</feature>
<feature type="region of interest" description="II">
    <location>
        <begin position="23"/>
        <end position="75"/>
    </location>
</feature>
<feature type="region of interest" description="Disordered" evidence="3">
    <location>
        <begin position="27"/>
        <end position="59"/>
    </location>
</feature>
<feature type="region of interest" description="III">
    <location>
        <begin position="76"/>
        <end position="157"/>
    </location>
</feature>
<feature type="region of interest" description="IV (linker domain)">
    <location>
        <begin position="158"/>
        <end position="166"/>
    </location>
</feature>
<feature type="region of interest" description="V (Cys-rich)">
    <location>
        <begin position="167"/>
        <end position="252"/>
    </location>
</feature>
<feature type="compositionally biased region" description="Basic residues" evidence="3">
    <location>
        <begin position="45"/>
        <end position="55"/>
    </location>
</feature>
<feature type="glycosylation site" description="N-linked (GlcNAc...) asparagine" evidence="2">
    <location>
        <position position="62"/>
    </location>
</feature>
<feature type="glycosylation site" description="N-linked (GlcNAc...) asparagine" evidence="2">
    <location>
        <position position="127"/>
    </location>
</feature>
<feature type="glycosylation site" description="N-linked (GlcNAc...) asparagine" evidence="2">
    <location>
        <position position="137"/>
    </location>
</feature>
<feature type="glycosylation site" description="N-linked (GlcNAc...) asparagine" evidence="2">
    <location>
        <position position="143"/>
    </location>
</feature>
<gene>
    <name type="primary">Nxph3</name>
</gene>
<proteinExistence type="evidence at transcript level"/>